<proteinExistence type="inferred from homology"/>
<accession>B1LKT5</accession>
<organism>
    <name type="scientific">Escherichia coli (strain SMS-3-5 / SECEC)</name>
    <dbReference type="NCBI Taxonomy" id="439855"/>
    <lineage>
        <taxon>Bacteria</taxon>
        <taxon>Pseudomonadati</taxon>
        <taxon>Pseudomonadota</taxon>
        <taxon>Gammaproteobacteria</taxon>
        <taxon>Enterobacterales</taxon>
        <taxon>Enterobacteriaceae</taxon>
        <taxon>Escherichia</taxon>
    </lineage>
</organism>
<protein>
    <recommendedName>
        <fullName evidence="1">Nucleoid-associated protein YejK</fullName>
    </recommendedName>
</protein>
<dbReference type="EMBL" id="CP000970">
    <property type="protein sequence ID" value="ACB16615.1"/>
    <property type="molecule type" value="Genomic_DNA"/>
</dbReference>
<dbReference type="RefSeq" id="WP_000050789.1">
    <property type="nucleotide sequence ID" value="NC_010498.1"/>
</dbReference>
<dbReference type="SMR" id="B1LKT5"/>
<dbReference type="GeneID" id="75206440"/>
<dbReference type="KEGG" id="ecm:EcSMS35_2335"/>
<dbReference type="HOGENOM" id="CLU_063050_0_1_6"/>
<dbReference type="Proteomes" id="UP000007011">
    <property type="component" value="Chromosome"/>
</dbReference>
<dbReference type="GO" id="GO:0043590">
    <property type="term" value="C:bacterial nucleoid"/>
    <property type="evidence" value="ECO:0007669"/>
    <property type="project" value="TreeGrafter"/>
</dbReference>
<dbReference type="GO" id="GO:0005737">
    <property type="term" value="C:cytoplasm"/>
    <property type="evidence" value="ECO:0007669"/>
    <property type="project" value="UniProtKB-UniRule"/>
</dbReference>
<dbReference type="GO" id="GO:0003690">
    <property type="term" value="F:double-stranded DNA binding"/>
    <property type="evidence" value="ECO:0007669"/>
    <property type="project" value="TreeGrafter"/>
</dbReference>
<dbReference type="GO" id="GO:0003727">
    <property type="term" value="F:single-stranded RNA binding"/>
    <property type="evidence" value="ECO:0007669"/>
    <property type="project" value="TreeGrafter"/>
</dbReference>
<dbReference type="HAMAP" id="MF_00730">
    <property type="entry name" value="NdpA"/>
    <property type="match status" value="1"/>
</dbReference>
<dbReference type="InterPro" id="IPR007358">
    <property type="entry name" value="Nucleoid_associated_NdpA"/>
</dbReference>
<dbReference type="NCBIfam" id="NF001557">
    <property type="entry name" value="PRK00378.1"/>
    <property type="match status" value="1"/>
</dbReference>
<dbReference type="PANTHER" id="PTHR38772">
    <property type="match status" value="1"/>
</dbReference>
<dbReference type="PANTHER" id="PTHR38772:SF1">
    <property type="entry name" value="NUCLEOID-ASSOCIATED PROTEIN YEJK"/>
    <property type="match status" value="1"/>
</dbReference>
<dbReference type="Pfam" id="PF04245">
    <property type="entry name" value="NA37"/>
    <property type="match status" value="1"/>
</dbReference>
<name>NDPA_ECOSM</name>
<feature type="chain" id="PRO_1000191556" description="Nucleoid-associated protein YejK">
    <location>
        <begin position="1"/>
        <end position="335"/>
    </location>
</feature>
<keyword id="KW-0963">Cytoplasm</keyword>
<reference key="1">
    <citation type="journal article" date="2008" name="J. Bacteriol.">
        <title>Insights into the environmental resistance gene pool from the genome sequence of the multidrug-resistant environmental isolate Escherichia coli SMS-3-5.</title>
        <authorList>
            <person name="Fricke W.F."/>
            <person name="Wright M.S."/>
            <person name="Lindell A.H."/>
            <person name="Harkins D.M."/>
            <person name="Baker-Austin C."/>
            <person name="Ravel J."/>
            <person name="Stepanauskas R."/>
        </authorList>
    </citation>
    <scope>NUCLEOTIDE SEQUENCE [LARGE SCALE GENOMIC DNA]</scope>
    <source>
        <strain>SMS-3-5 / SECEC</strain>
    </source>
</reference>
<sequence length="335" mass="37823">MSLDINQIALHQLIKRDEQNLELVLRDSLLEPTETVVEMVAELHRVYSAKNKAYGLFSEESELAQTLRLQRQGEEDFLAFSRAATGRLRDELAKYPFADGGFVLFCHYRYLAVEYLLVAVLSNLSSMRVNENLDINPTHYLDINHADIVARIDLTEWETNPESTRYLTFLKGRVGRKVADFFMDFLGASEGLNAKAQNRGLLQAVDDFTAEAQLDKAERQNVRQQVYSYCNEQLQAGEEIELESLSKELAGVSEVSFTEFAAEKGYELEESFPADRSTLRQLTKFAGSGGGLTINFDAMLLGERIFWDPATDTLTIKGTPPNLRDQLQRRTSGGN</sequence>
<gene>
    <name evidence="1" type="primary">yejK</name>
    <name type="ordered locus">EcSMS35_2335</name>
</gene>
<comment type="subcellular location">
    <subcellularLocation>
        <location evidence="1">Cytoplasm</location>
        <location evidence="1">Nucleoid</location>
    </subcellularLocation>
</comment>
<comment type="similarity">
    <text evidence="1">Belongs to the YejK family.</text>
</comment>
<evidence type="ECO:0000255" key="1">
    <source>
        <dbReference type="HAMAP-Rule" id="MF_00730"/>
    </source>
</evidence>